<evidence type="ECO:0000250" key="1">
    <source>
        <dbReference type="UniProtKB" id="P9WFD7"/>
    </source>
</evidence>
<evidence type="ECO:0000269" key="2">
    <source>
    </source>
</evidence>
<evidence type="ECO:0000269" key="3">
    <source>
    </source>
</evidence>
<evidence type="ECO:0000269" key="4">
    <source>
    </source>
</evidence>
<evidence type="ECO:0000269" key="5">
    <source>
    </source>
</evidence>
<evidence type="ECO:0000269" key="6">
    <source>
    </source>
</evidence>
<evidence type="ECO:0000305" key="7"/>
<dbReference type="EMBL" id="AL123456">
    <property type="protein sequence ID" value="CCP44768.1"/>
    <property type="molecule type" value="Genomic_DNA"/>
</dbReference>
<dbReference type="PIR" id="B70758">
    <property type="entry name" value="B70758"/>
</dbReference>
<dbReference type="RefSeq" id="NP_216512.1">
    <property type="nucleotide sequence ID" value="NC_000962.3"/>
</dbReference>
<dbReference type="RefSeq" id="WP_003899121.1">
    <property type="nucleotide sequence ID" value="NZ_NVQJ01000043.1"/>
</dbReference>
<dbReference type="SMR" id="P9WLP1"/>
<dbReference type="FunCoup" id="P9WLP1">
    <property type="interactions" value="3"/>
</dbReference>
<dbReference type="STRING" id="83332.Rv1996"/>
<dbReference type="PaxDb" id="83332-Rv1996"/>
<dbReference type="DNASU" id="888863"/>
<dbReference type="GeneID" id="888863"/>
<dbReference type="KEGG" id="mtu:Rv1996"/>
<dbReference type="KEGG" id="mtv:RVBD_1996"/>
<dbReference type="TubercuList" id="Rv1996"/>
<dbReference type="eggNOG" id="COG0589">
    <property type="taxonomic scope" value="Bacteria"/>
</dbReference>
<dbReference type="InParanoid" id="P9WLP1"/>
<dbReference type="OrthoDB" id="3174546at2"/>
<dbReference type="PhylomeDB" id="P9WLP1"/>
<dbReference type="Proteomes" id="UP000001584">
    <property type="component" value="Chromosome"/>
</dbReference>
<dbReference type="GO" id="GO:0009274">
    <property type="term" value="C:peptidoglycan-based cell wall"/>
    <property type="evidence" value="ECO:0007005"/>
    <property type="project" value="MTBBASE"/>
</dbReference>
<dbReference type="GO" id="GO:0005886">
    <property type="term" value="C:plasma membrane"/>
    <property type="evidence" value="ECO:0007005"/>
    <property type="project" value="MTBBASE"/>
</dbReference>
<dbReference type="GO" id="GO:0005524">
    <property type="term" value="F:ATP binding"/>
    <property type="evidence" value="ECO:0007669"/>
    <property type="project" value="UniProtKB-KW"/>
</dbReference>
<dbReference type="CDD" id="cd23944">
    <property type="entry name" value="USP_Rv2623_repeat1"/>
    <property type="match status" value="1"/>
</dbReference>
<dbReference type="CDD" id="cd23661">
    <property type="entry name" value="USP_Rv2623_repeat2"/>
    <property type="match status" value="1"/>
</dbReference>
<dbReference type="FunFam" id="3.40.50.620:FF:000123">
    <property type="entry name" value="Universal stress protein family"/>
    <property type="match status" value="2"/>
</dbReference>
<dbReference type="Gene3D" id="3.40.50.620">
    <property type="entry name" value="HUPs"/>
    <property type="match status" value="2"/>
</dbReference>
<dbReference type="InterPro" id="IPR014729">
    <property type="entry name" value="Rossmann-like_a/b/a_fold"/>
</dbReference>
<dbReference type="InterPro" id="IPR006015">
    <property type="entry name" value="Universal_stress_UspA"/>
</dbReference>
<dbReference type="InterPro" id="IPR006016">
    <property type="entry name" value="UspA"/>
</dbReference>
<dbReference type="PANTHER" id="PTHR46268">
    <property type="entry name" value="STRESS RESPONSE PROTEIN NHAX"/>
    <property type="match status" value="1"/>
</dbReference>
<dbReference type="PANTHER" id="PTHR46268:SF27">
    <property type="entry name" value="UNIVERSAL STRESS PROTEIN RV2623"/>
    <property type="match status" value="1"/>
</dbReference>
<dbReference type="Pfam" id="PF00582">
    <property type="entry name" value="Usp"/>
    <property type="match status" value="2"/>
</dbReference>
<dbReference type="PRINTS" id="PR01438">
    <property type="entry name" value="UNVRSLSTRESS"/>
</dbReference>
<dbReference type="SUPFAM" id="SSF52402">
    <property type="entry name" value="Adenine nucleotide alpha hydrolases-like"/>
    <property type="match status" value="2"/>
</dbReference>
<protein>
    <recommendedName>
        <fullName>Universal stress protein Rv1996</fullName>
        <shortName>USP Rv1996</shortName>
    </recommendedName>
</protein>
<reference key="1">
    <citation type="journal article" date="1998" name="Nature">
        <title>Deciphering the biology of Mycobacterium tuberculosis from the complete genome sequence.</title>
        <authorList>
            <person name="Cole S.T."/>
            <person name="Brosch R."/>
            <person name="Parkhill J."/>
            <person name="Garnier T."/>
            <person name="Churcher C.M."/>
            <person name="Harris D.E."/>
            <person name="Gordon S.V."/>
            <person name="Eiglmeier K."/>
            <person name="Gas S."/>
            <person name="Barry C.E. III"/>
            <person name="Tekaia F."/>
            <person name="Badcock K."/>
            <person name="Basham D."/>
            <person name="Brown D."/>
            <person name="Chillingworth T."/>
            <person name="Connor R."/>
            <person name="Davies R.M."/>
            <person name="Devlin K."/>
            <person name="Feltwell T."/>
            <person name="Gentles S."/>
            <person name="Hamlin N."/>
            <person name="Holroyd S."/>
            <person name="Hornsby T."/>
            <person name="Jagels K."/>
            <person name="Krogh A."/>
            <person name="McLean J."/>
            <person name="Moule S."/>
            <person name="Murphy L.D."/>
            <person name="Oliver S."/>
            <person name="Osborne J."/>
            <person name="Quail M.A."/>
            <person name="Rajandream M.A."/>
            <person name="Rogers J."/>
            <person name="Rutter S."/>
            <person name="Seeger K."/>
            <person name="Skelton S."/>
            <person name="Squares S."/>
            <person name="Squares R."/>
            <person name="Sulston J.E."/>
            <person name="Taylor K."/>
            <person name="Whitehead S."/>
            <person name="Barrell B.G."/>
        </authorList>
    </citation>
    <scope>NUCLEOTIDE SEQUENCE [LARGE SCALE GENOMIC DNA]</scope>
    <source>
        <strain>ATCC 25618 / H37Rv</strain>
    </source>
</reference>
<reference key="2">
    <citation type="journal article" date="2003" name="J. Exp. Med.">
        <title>Inhibition of respiration by nitric oxide induces a Mycobacterium tuberculosis dormancy program.</title>
        <authorList>
            <person name="Voskuil M.I."/>
            <person name="Schnappinger D."/>
            <person name="Visconti K.C."/>
            <person name="Harrell M.I."/>
            <person name="Dolganov G.M."/>
            <person name="Sherman D.R."/>
            <person name="Schoolnik G.K."/>
        </authorList>
    </citation>
    <scope>INDUCTION BY NITRIC OXIDE (NO) AND BY HYPOXIA</scope>
    <scope>DORMANCY REGULON</scope>
    <source>
        <strain>ATCC 25618 / H37Rv</strain>
    </source>
</reference>
<reference key="3">
    <citation type="journal article" date="2008" name="Cell Host Microbe">
        <title>Mycobacterium tuberculosis senses host-derived carbon monoxide during macrophage infection.</title>
        <authorList>
            <person name="Shiloh M.U."/>
            <person name="Manzanillo P."/>
            <person name="Cox J.S."/>
        </authorList>
    </citation>
    <scope>INDUCTION BY CARBON MONOXIDE (CO)</scope>
    <source>
        <strain>ATCC 35801 / TMC 107 / Erdman</strain>
    </source>
</reference>
<reference key="4">
    <citation type="journal article" date="2008" name="J. Biol. Chem.">
        <title>Heme oxygenase-1-derived carbon monoxide induces the Mycobacterium tuberculosis dormancy regulon.</title>
        <authorList>
            <person name="Kumar A."/>
            <person name="Deshane J.S."/>
            <person name="Crossman D.K."/>
            <person name="Bolisetty S."/>
            <person name="Yan B.S."/>
            <person name="Kramnik I."/>
            <person name="Agarwal A."/>
            <person name="Steyn A.J."/>
        </authorList>
    </citation>
    <scope>INDUCTION BY CARBON MONOXIDE (CO)</scope>
    <scope>DORMANCY REGULON</scope>
    <source>
        <strain>ATCC 25618 / H37Rv</strain>
    </source>
</reference>
<reference key="5">
    <citation type="journal article" date="2010" name="PLoS ONE">
        <title>Prokaryotic ubiquitin-like protein (Pup) proteome of Mycobacterium tuberculosis.</title>
        <authorList>
            <person name="Festa R.A."/>
            <person name="McAllister F."/>
            <person name="Pearce M.J."/>
            <person name="Mintseris J."/>
            <person name="Burns K.E."/>
            <person name="Gygi S.P."/>
            <person name="Darwin K.H."/>
        </authorList>
    </citation>
    <scope>PUPYLATION AT LYS-88</scope>
    <scope>IDENTIFICATION BY MASS SPECTROMETRY</scope>
    <source>
        <strain>ATCC 25618 / H37Rv</strain>
    </source>
</reference>
<reference key="6">
    <citation type="journal article" date="2010" name="Tuberculosis">
        <title>Individual Mycobacterium tuberculosis universal stress protein homologues are dispensable in vitro.</title>
        <authorList>
            <person name="Hingley-Wilson S.M."/>
            <person name="Lougheed K.E."/>
            <person name="Ferguson K."/>
            <person name="Leiva S."/>
            <person name="Williams H.D."/>
        </authorList>
    </citation>
    <scope>DISRUPTION PHENOTYPE</scope>
    <source>
        <strain>ATCC 25618 / H37Rv</strain>
    </source>
</reference>
<reference key="7">
    <citation type="journal article" date="2011" name="Mol. Cell. Proteomics">
        <title>Proteogenomic analysis of Mycobacterium tuberculosis by high resolution mass spectrometry.</title>
        <authorList>
            <person name="Kelkar D.S."/>
            <person name="Kumar D."/>
            <person name="Kumar P."/>
            <person name="Balakrishnan L."/>
            <person name="Muthusamy B."/>
            <person name="Yadav A.K."/>
            <person name="Shrivastava P."/>
            <person name="Marimuthu A."/>
            <person name="Anand S."/>
            <person name="Sundaram H."/>
            <person name="Kingsbury R."/>
            <person name="Harsha H.C."/>
            <person name="Nair B."/>
            <person name="Prasad T.S."/>
            <person name="Chauhan D.S."/>
            <person name="Katoch K."/>
            <person name="Katoch V.M."/>
            <person name="Kumar P."/>
            <person name="Chaerkady R."/>
            <person name="Ramachandran S."/>
            <person name="Dash D."/>
            <person name="Pandey A."/>
        </authorList>
    </citation>
    <scope>IDENTIFICATION BY MASS SPECTROMETRY [LARGE SCALE ANALYSIS]</scope>
    <source>
        <strain>ATCC 25618 / H37Rv</strain>
    </source>
</reference>
<name>Y1996_MYCTU</name>
<comment type="induction">
    <text evidence="2 3 4">A member of the dormancy regulon. Induced in response to reduced oxygen tension (hypoxia), low levels of nitric oxide (NO) and carbon monoxide (CO). It is hoped that this regulon will give insight into the latent, or dormant phase of infection.</text>
</comment>
<comment type="disruption phenotype">
    <text evidence="6">No visible phenotype under normal or hypoxic and normoxic stationary phase growth, nor in mouse- or human-derived macrophage cell lines.</text>
</comment>
<comment type="similarity">
    <text evidence="7">Belongs to the universal stress protein A family.</text>
</comment>
<keyword id="KW-0067">ATP-binding</keyword>
<keyword id="KW-1017">Isopeptide bond</keyword>
<keyword id="KW-0547">Nucleotide-binding</keyword>
<keyword id="KW-1185">Reference proteome</keyword>
<keyword id="KW-0832">Ubl conjugation</keyword>
<organism>
    <name type="scientific">Mycobacterium tuberculosis (strain ATCC 25618 / H37Rv)</name>
    <dbReference type="NCBI Taxonomy" id="83332"/>
    <lineage>
        <taxon>Bacteria</taxon>
        <taxon>Bacillati</taxon>
        <taxon>Actinomycetota</taxon>
        <taxon>Actinomycetes</taxon>
        <taxon>Mycobacteriales</taxon>
        <taxon>Mycobacteriaceae</taxon>
        <taxon>Mycobacterium</taxon>
        <taxon>Mycobacterium tuberculosis complex</taxon>
    </lineage>
</organism>
<gene>
    <name type="ordered locus">Rv1996</name>
    <name type="ORF">MTCY39.23c</name>
</gene>
<accession>P9WLP1</accession>
<accession>L0T8H1</accession>
<accession>P0A5F7</accession>
<accession>Q10862</accession>
<sequence length="317" mass="33880">MSAQQTNLGIVVGVDGSPCSHTAVEWAARDAQMRNVALRVVQVVPPVITAPEGWAFEYSRFQEAQKREIVEHSYLVAQAHQIVEQAHKVALEASSSGRAAQITGEVLHGQIVPTLANISRQVAMVVLGYRGQGAVAGALLGSVSSSLVRHAHGPVAVIPEEPRPARPPHAPVVVGIDGSPTSGLAAEIAFDEASRRGVDLVALHAWSDMGPLDFPRLNWAPIEWRNLEDEQEKMLARRLSGWQDRYPDVVVHKVVVCDRPAPRLLELAQTAQLVVVGSHGRGGFPGMHLGSVSRAVVNSGQAPVIVARIPQDPAVPA</sequence>
<proteinExistence type="evidence at protein level"/>
<feature type="chain" id="PRO_0000103924" description="Universal stress protein Rv1996">
    <location>
        <begin position="1"/>
        <end position="317"/>
    </location>
</feature>
<feature type="binding site" evidence="1">
    <location>
        <position position="13"/>
    </location>
    <ligand>
        <name>ATP</name>
        <dbReference type="ChEBI" id="CHEBI:30616"/>
        <label>1</label>
    </ligand>
</feature>
<feature type="binding site" evidence="1">
    <location>
        <begin position="128"/>
        <end position="134"/>
    </location>
    <ligand>
        <name>ATP</name>
        <dbReference type="ChEBI" id="CHEBI:30616"/>
        <label>1</label>
    </ligand>
</feature>
<feature type="binding site" evidence="1">
    <location>
        <begin position="142"/>
        <end position="143"/>
    </location>
    <ligand>
        <name>ATP</name>
        <dbReference type="ChEBI" id="CHEBI:30616"/>
        <label>1</label>
    </ligand>
</feature>
<feature type="binding site" evidence="1">
    <location>
        <position position="175"/>
    </location>
    <ligand>
        <name>ATP</name>
        <dbReference type="ChEBI" id="CHEBI:30616"/>
        <label>2</label>
    </ligand>
</feature>
<feature type="binding site" evidence="1">
    <location>
        <position position="208"/>
    </location>
    <ligand>
        <name>ATP</name>
        <dbReference type="ChEBI" id="CHEBI:30616"/>
        <label>2</label>
    </ligand>
</feature>
<feature type="binding site" evidence="1">
    <location>
        <begin position="277"/>
        <end position="283"/>
    </location>
    <ligand>
        <name>ATP</name>
        <dbReference type="ChEBI" id="CHEBI:30616"/>
        <label>2</label>
    </ligand>
</feature>
<feature type="binding site" evidence="1">
    <location>
        <begin position="291"/>
        <end position="293"/>
    </location>
    <ligand>
        <name>ATP</name>
        <dbReference type="ChEBI" id="CHEBI:30616"/>
        <label>2</label>
    </ligand>
</feature>
<feature type="cross-link" description="Isoglutamyl lysine isopeptide (Lys-Gln) (interchain with Q-Cter in protein Pup)" evidence="5">
    <location>
        <position position="88"/>
    </location>
</feature>